<evidence type="ECO:0000255" key="1">
    <source>
        <dbReference type="HAMAP-Rule" id="MF_01912"/>
    </source>
</evidence>
<name>SQUT_SALTI</name>
<proteinExistence type="inferred from homology"/>
<gene>
    <name type="primary">yihT</name>
    <name type="ordered locus">STY3856</name>
    <name type="ordered locus">t3599</name>
</gene>
<reference key="1">
    <citation type="journal article" date="2001" name="Nature">
        <title>Complete genome sequence of a multiple drug resistant Salmonella enterica serovar Typhi CT18.</title>
        <authorList>
            <person name="Parkhill J."/>
            <person name="Dougan G."/>
            <person name="James K.D."/>
            <person name="Thomson N.R."/>
            <person name="Pickard D."/>
            <person name="Wain J."/>
            <person name="Churcher C.M."/>
            <person name="Mungall K.L."/>
            <person name="Bentley S.D."/>
            <person name="Holden M.T.G."/>
            <person name="Sebaihia M."/>
            <person name="Baker S."/>
            <person name="Basham D."/>
            <person name="Brooks K."/>
            <person name="Chillingworth T."/>
            <person name="Connerton P."/>
            <person name="Cronin A."/>
            <person name="Davis P."/>
            <person name="Davies R.M."/>
            <person name="Dowd L."/>
            <person name="White N."/>
            <person name="Farrar J."/>
            <person name="Feltwell T."/>
            <person name="Hamlin N."/>
            <person name="Haque A."/>
            <person name="Hien T.T."/>
            <person name="Holroyd S."/>
            <person name="Jagels K."/>
            <person name="Krogh A."/>
            <person name="Larsen T.S."/>
            <person name="Leather S."/>
            <person name="Moule S."/>
            <person name="O'Gaora P."/>
            <person name="Parry C."/>
            <person name="Quail M.A."/>
            <person name="Rutherford K.M."/>
            <person name="Simmonds M."/>
            <person name="Skelton J."/>
            <person name="Stevens K."/>
            <person name="Whitehead S."/>
            <person name="Barrell B.G."/>
        </authorList>
    </citation>
    <scope>NUCLEOTIDE SEQUENCE [LARGE SCALE GENOMIC DNA]</scope>
    <source>
        <strain>CT18</strain>
    </source>
</reference>
<reference key="2">
    <citation type="journal article" date="2003" name="J. Bacteriol.">
        <title>Comparative genomics of Salmonella enterica serovar Typhi strains Ty2 and CT18.</title>
        <authorList>
            <person name="Deng W."/>
            <person name="Liou S.-R."/>
            <person name="Plunkett G. III"/>
            <person name="Mayhew G.F."/>
            <person name="Rose D.J."/>
            <person name="Burland V."/>
            <person name="Kodoyianni V."/>
            <person name="Schwartz D.C."/>
            <person name="Blattner F.R."/>
        </authorList>
    </citation>
    <scope>NUCLEOTIDE SEQUENCE [LARGE SCALE GENOMIC DNA]</scope>
    <source>
        <strain>ATCC 700931 / Ty2</strain>
    </source>
</reference>
<protein>
    <recommendedName>
        <fullName evidence="1">Sulfofructosephosphate aldolase</fullName>
        <shortName evidence="1">SFP aldolase</shortName>
        <ecNumber evidence="1">4.1.2.57</ecNumber>
    </recommendedName>
</protein>
<keyword id="KW-0119">Carbohydrate metabolism</keyword>
<keyword id="KW-0456">Lyase</keyword>
<keyword id="KW-0704">Schiff base</keyword>
<sequence length="292" mass="31867">MNNYTIKDITRASGGFAMLAVDQREAMRLMFAAAGAKTPVADSVLTDFKVNAAKILSPYASAVLLDQQFCYRQAVEQNAVAKSCAMIVAADDFIPGNGIPVDNVVIDKKINAQAVKRDGAKALKLLVLWRSDEDAQQRLDMVKEFNELCHSNGLLSIIEPVVRPPRCGDKFDREQAIIDAAKELGDSGADLYKVEMPLYGKGARSDLLTASQRLNGHINMPWVILSSGVDEKLFPRAVRVAMEAGASGFLAGRAVWSSVIGLPDTELMLRDVSAPKLQRLGEIVDEMMAKRR</sequence>
<feature type="chain" id="PRO_0000203971" description="Sulfofructosephosphate aldolase">
    <location>
        <begin position="1"/>
        <end position="292"/>
    </location>
</feature>
<feature type="active site" description="Schiff-base intermediate with substrate" evidence="1">
    <location>
        <position position="193"/>
    </location>
</feature>
<dbReference type="EC" id="4.1.2.57" evidence="1"/>
<dbReference type="EMBL" id="AL513382">
    <property type="protein sequence ID" value="CAD09604.1"/>
    <property type="molecule type" value="Genomic_DNA"/>
</dbReference>
<dbReference type="EMBL" id="AE014613">
    <property type="protein sequence ID" value="AAO71102.1"/>
    <property type="molecule type" value="Genomic_DNA"/>
</dbReference>
<dbReference type="RefSeq" id="NP_458029.1">
    <property type="nucleotide sequence ID" value="NC_003198.1"/>
</dbReference>
<dbReference type="RefSeq" id="WP_001067413.1">
    <property type="nucleotide sequence ID" value="NZ_WSUR01000010.1"/>
</dbReference>
<dbReference type="SMR" id="Q8Z2T5"/>
<dbReference type="STRING" id="220341.gene:17587715"/>
<dbReference type="KEGG" id="stt:t3599"/>
<dbReference type="KEGG" id="sty:STY3856"/>
<dbReference type="PATRIC" id="fig|220341.7.peg.3936"/>
<dbReference type="eggNOG" id="COG3684">
    <property type="taxonomic scope" value="Bacteria"/>
</dbReference>
<dbReference type="HOGENOM" id="CLU_083300_0_0_6"/>
<dbReference type="OMA" id="CIKILLY"/>
<dbReference type="OrthoDB" id="9802970at2"/>
<dbReference type="Proteomes" id="UP000000541">
    <property type="component" value="Chromosome"/>
</dbReference>
<dbReference type="Proteomes" id="UP000002670">
    <property type="component" value="Chromosome"/>
</dbReference>
<dbReference type="GO" id="GO:0061595">
    <property type="term" value="F:6-deoxy-6-sulfofructose-1-phosphate aldolase activity"/>
    <property type="evidence" value="ECO:0007669"/>
    <property type="project" value="UniProtKB-UniRule"/>
</dbReference>
<dbReference type="GO" id="GO:1902777">
    <property type="term" value="P:6-sulfoquinovose(1-) catabolic process"/>
    <property type="evidence" value="ECO:0007669"/>
    <property type="project" value="UniProtKB-UniRule"/>
</dbReference>
<dbReference type="CDD" id="cd00945">
    <property type="entry name" value="Aldolase_Class_I"/>
    <property type="match status" value="1"/>
</dbReference>
<dbReference type="FunFam" id="3.20.20.70:FF:000089">
    <property type="entry name" value="Sulfofructosephosphate aldolase"/>
    <property type="match status" value="1"/>
</dbReference>
<dbReference type="Gene3D" id="3.20.20.70">
    <property type="entry name" value="Aldolase class I"/>
    <property type="match status" value="1"/>
</dbReference>
<dbReference type="HAMAP" id="MF_01912">
    <property type="entry name" value="SFP_aldolase"/>
    <property type="match status" value="1"/>
</dbReference>
<dbReference type="InterPro" id="IPR013785">
    <property type="entry name" value="Aldolase_TIM"/>
</dbReference>
<dbReference type="InterPro" id="IPR002915">
    <property type="entry name" value="DeoC/FbaB/LacD_aldolase"/>
</dbReference>
<dbReference type="InterPro" id="IPR050552">
    <property type="entry name" value="LacD_aldolase"/>
</dbReference>
<dbReference type="InterPro" id="IPR017291">
    <property type="entry name" value="SFP_aldolase_YihT"/>
</dbReference>
<dbReference type="PANTHER" id="PTHR39340">
    <property type="entry name" value="SULFOFRUCTOSEPHOSPHATE ALDOLASE"/>
    <property type="match status" value="1"/>
</dbReference>
<dbReference type="PANTHER" id="PTHR39340:SF1">
    <property type="entry name" value="SULFOFRUCTOSEPHOSPHATE ALDOLASE"/>
    <property type="match status" value="1"/>
</dbReference>
<dbReference type="Pfam" id="PF01791">
    <property type="entry name" value="DeoC"/>
    <property type="match status" value="1"/>
</dbReference>
<dbReference type="PIRSF" id="PIRSF037840">
    <property type="entry name" value="Aldolase_YihT"/>
    <property type="match status" value="1"/>
</dbReference>
<dbReference type="SMART" id="SM01133">
    <property type="entry name" value="DeoC"/>
    <property type="match status" value="1"/>
</dbReference>
<dbReference type="SUPFAM" id="SSF51569">
    <property type="entry name" value="Aldolase"/>
    <property type="match status" value="1"/>
</dbReference>
<organism>
    <name type="scientific">Salmonella typhi</name>
    <dbReference type="NCBI Taxonomy" id="90370"/>
    <lineage>
        <taxon>Bacteria</taxon>
        <taxon>Pseudomonadati</taxon>
        <taxon>Pseudomonadota</taxon>
        <taxon>Gammaproteobacteria</taxon>
        <taxon>Enterobacterales</taxon>
        <taxon>Enterobacteriaceae</taxon>
        <taxon>Salmonella</taxon>
    </lineage>
</organism>
<accession>Q8Z2T5</accession>
<comment type="function">
    <text evidence="1">Cleaves 6-deoxy-6-sulfo-D-fructose 1-phosphate (SFP) to form dihydroxyacetone phosphate (DHAP) and 3-sulfolactaldehyde (SLA).</text>
</comment>
<comment type="catalytic activity">
    <reaction evidence="1">
        <text>6-deoxy-6-sulfo-D-fructose 1-phosphate = (2S)-3-sulfolactaldehyde + dihydroxyacetone phosphate</text>
        <dbReference type="Rhea" id="RHEA:40515"/>
        <dbReference type="ChEBI" id="CHEBI:57642"/>
        <dbReference type="ChEBI" id="CHEBI:77134"/>
        <dbReference type="ChEBI" id="CHEBI:90109"/>
        <dbReference type="EC" id="4.1.2.57"/>
    </reaction>
    <physiologicalReaction direction="left-to-right" evidence="1">
        <dbReference type="Rhea" id="RHEA:40516"/>
    </physiologicalReaction>
</comment>
<comment type="subunit">
    <text evidence="1">Homotetramer.</text>
</comment>
<comment type="similarity">
    <text evidence="1">Belongs to the aldolase LacD family.</text>
</comment>